<dbReference type="EMBL" id="CP000312">
    <property type="protein sequence ID" value="ABG86998.1"/>
    <property type="molecule type" value="Genomic_DNA"/>
</dbReference>
<dbReference type="RefSeq" id="WP_003451643.1">
    <property type="nucleotide sequence ID" value="NZ_CAXVKH010000002.1"/>
</dbReference>
<dbReference type="SMR" id="Q0SRT6"/>
<dbReference type="GeneID" id="93001574"/>
<dbReference type="KEGG" id="cpr:CPR_1857"/>
<dbReference type="Proteomes" id="UP000001824">
    <property type="component" value="Chromosome"/>
</dbReference>
<dbReference type="GO" id="GO:0022625">
    <property type="term" value="C:cytosolic large ribosomal subunit"/>
    <property type="evidence" value="ECO:0007669"/>
    <property type="project" value="TreeGrafter"/>
</dbReference>
<dbReference type="GO" id="GO:0003735">
    <property type="term" value="F:structural constituent of ribosome"/>
    <property type="evidence" value="ECO:0007669"/>
    <property type="project" value="InterPro"/>
</dbReference>
<dbReference type="GO" id="GO:0006412">
    <property type="term" value="P:translation"/>
    <property type="evidence" value="ECO:0007669"/>
    <property type="project" value="UniProtKB-UniRule"/>
</dbReference>
<dbReference type="FunFam" id="4.10.410.60:FF:000001">
    <property type="entry name" value="50S ribosomal protein L35"/>
    <property type="match status" value="1"/>
</dbReference>
<dbReference type="Gene3D" id="4.10.410.60">
    <property type="match status" value="1"/>
</dbReference>
<dbReference type="HAMAP" id="MF_00514">
    <property type="entry name" value="Ribosomal_bL35"/>
    <property type="match status" value="1"/>
</dbReference>
<dbReference type="InterPro" id="IPR001706">
    <property type="entry name" value="Ribosomal_bL35"/>
</dbReference>
<dbReference type="InterPro" id="IPR021137">
    <property type="entry name" value="Ribosomal_bL35-like"/>
</dbReference>
<dbReference type="InterPro" id="IPR018265">
    <property type="entry name" value="Ribosomal_bL35_CS"/>
</dbReference>
<dbReference type="InterPro" id="IPR037229">
    <property type="entry name" value="Ribosomal_bL35_sf"/>
</dbReference>
<dbReference type="NCBIfam" id="TIGR00001">
    <property type="entry name" value="rpmI_bact"/>
    <property type="match status" value="1"/>
</dbReference>
<dbReference type="PANTHER" id="PTHR33343">
    <property type="entry name" value="54S RIBOSOMAL PROTEIN BL35M"/>
    <property type="match status" value="1"/>
</dbReference>
<dbReference type="PANTHER" id="PTHR33343:SF1">
    <property type="entry name" value="LARGE RIBOSOMAL SUBUNIT PROTEIN BL35M"/>
    <property type="match status" value="1"/>
</dbReference>
<dbReference type="Pfam" id="PF01632">
    <property type="entry name" value="Ribosomal_L35p"/>
    <property type="match status" value="1"/>
</dbReference>
<dbReference type="PRINTS" id="PR00064">
    <property type="entry name" value="RIBOSOMALL35"/>
</dbReference>
<dbReference type="SUPFAM" id="SSF143034">
    <property type="entry name" value="L35p-like"/>
    <property type="match status" value="1"/>
</dbReference>
<dbReference type="PROSITE" id="PS00936">
    <property type="entry name" value="RIBOSOMAL_L35"/>
    <property type="match status" value="1"/>
</dbReference>
<reference key="1">
    <citation type="journal article" date="2006" name="Genome Res.">
        <title>Skewed genomic variability in strains of the toxigenic bacterial pathogen, Clostridium perfringens.</title>
        <authorList>
            <person name="Myers G.S.A."/>
            <person name="Rasko D.A."/>
            <person name="Cheung J.K."/>
            <person name="Ravel J."/>
            <person name="Seshadri R."/>
            <person name="DeBoy R.T."/>
            <person name="Ren Q."/>
            <person name="Varga J."/>
            <person name="Awad M.M."/>
            <person name="Brinkac L.M."/>
            <person name="Daugherty S.C."/>
            <person name="Haft D.H."/>
            <person name="Dodson R.J."/>
            <person name="Madupu R."/>
            <person name="Nelson W.C."/>
            <person name="Rosovitz M.J."/>
            <person name="Sullivan S.A."/>
            <person name="Khouri H."/>
            <person name="Dimitrov G.I."/>
            <person name="Watkins K.L."/>
            <person name="Mulligan S."/>
            <person name="Benton J."/>
            <person name="Radune D."/>
            <person name="Fisher D.J."/>
            <person name="Atkins H.S."/>
            <person name="Hiscox T."/>
            <person name="Jost B.H."/>
            <person name="Billington S.J."/>
            <person name="Songer J.G."/>
            <person name="McClane B.A."/>
            <person name="Titball R.W."/>
            <person name="Rood J.I."/>
            <person name="Melville S.B."/>
            <person name="Paulsen I.T."/>
        </authorList>
    </citation>
    <scope>NUCLEOTIDE SEQUENCE [LARGE SCALE GENOMIC DNA]</scope>
    <source>
        <strain>SM101 / Type A</strain>
    </source>
</reference>
<feature type="chain" id="PRO_0000258662" description="Large ribosomal subunit protein bL35">
    <location>
        <begin position="1"/>
        <end position="65"/>
    </location>
</feature>
<feature type="region of interest" description="Disordered" evidence="2">
    <location>
        <begin position="1"/>
        <end position="23"/>
    </location>
</feature>
<protein>
    <recommendedName>
        <fullName evidence="1">Large ribosomal subunit protein bL35</fullName>
    </recommendedName>
    <alternativeName>
        <fullName evidence="3">50S ribosomal protein L35</fullName>
    </alternativeName>
</protein>
<keyword id="KW-0687">Ribonucleoprotein</keyword>
<keyword id="KW-0689">Ribosomal protein</keyword>
<comment type="similarity">
    <text evidence="1">Belongs to the bacterial ribosomal protein bL35 family.</text>
</comment>
<sequence length="65" mass="7455">MPKMKTHRGAAKRFKKTGTGKLKRAHAFTSHILTKKSAKRKRNLRKTGYVSTAQEKAMKKLLPYL</sequence>
<evidence type="ECO:0000255" key="1">
    <source>
        <dbReference type="HAMAP-Rule" id="MF_00514"/>
    </source>
</evidence>
<evidence type="ECO:0000256" key="2">
    <source>
        <dbReference type="SAM" id="MobiDB-lite"/>
    </source>
</evidence>
<evidence type="ECO:0000305" key="3"/>
<organism>
    <name type="scientific">Clostridium perfringens (strain SM101 / Type A)</name>
    <dbReference type="NCBI Taxonomy" id="289380"/>
    <lineage>
        <taxon>Bacteria</taxon>
        <taxon>Bacillati</taxon>
        <taxon>Bacillota</taxon>
        <taxon>Clostridia</taxon>
        <taxon>Eubacteriales</taxon>
        <taxon>Clostridiaceae</taxon>
        <taxon>Clostridium</taxon>
    </lineage>
</organism>
<accession>Q0SRT6</accession>
<proteinExistence type="inferred from homology"/>
<gene>
    <name evidence="1" type="primary">rpmI</name>
    <name type="ordered locus">CPR_1857</name>
</gene>
<name>RL35_CLOPS</name>